<name>PCKA_BACC1</name>
<dbReference type="EC" id="4.1.1.49" evidence="1"/>
<dbReference type="EMBL" id="AE017194">
    <property type="protein sequence ID" value="AAS43817.1"/>
    <property type="molecule type" value="Genomic_DNA"/>
</dbReference>
<dbReference type="SMR" id="Q72YV4"/>
<dbReference type="KEGG" id="bca:BCE_4916"/>
<dbReference type="HOGENOM" id="CLU_018247_0_1_9"/>
<dbReference type="UniPathway" id="UPA00138"/>
<dbReference type="Proteomes" id="UP000002527">
    <property type="component" value="Chromosome"/>
</dbReference>
<dbReference type="GO" id="GO:0005829">
    <property type="term" value="C:cytosol"/>
    <property type="evidence" value="ECO:0007669"/>
    <property type="project" value="TreeGrafter"/>
</dbReference>
<dbReference type="GO" id="GO:0005524">
    <property type="term" value="F:ATP binding"/>
    <property type="evidence" value="ECO:0007669"/>
    <property type="project" value="UniProtKB-UniRule"/>
</dbReference>
<dbReference type="GO" id="GO:0046872">
    <property type="term" value="F:metal ion binding"/>
    <property type="evidence" value="ECO:0007669"/>
    <property type="project" value="UniProtKB-KW"/>
</dbReference>
<dbReference type="GO" id="GO:0004612">
    <property type="term" value="F:phosphoenolpyruvate carboxykinase (ATP) activity"/>
    <property type="evidence" value="ECO:0007669"/>
    <property type="project" value="UniProtKB-UniRule"/>
</dbReference>
<dbReference type="GO" id="GO:0006094">
    <property type="term" value="P:gluconeogenesis"/>
    <property type="evidence" value="ECO:0007669"/>
    <property type="project" value="UniProtKB-UniRule"/>
</dbReference>
<dbReference type="CDD" id="cd00484">
    <property type="entry name" value="PEPCK_ATP"/>
    <property type="match status" value="1"/>
</dbReference>
<dbReference type="FunFam" id="2.170.8.10:FF:000001">
    <property type="entry name" value="Phosphoenolpyruvate carboxykinase (ATP)"/>
    <property type="match status" value="1"/>
</dbReference>
<dbReference type="FunFam" id="3.40.449.10:FF:000001">
    <property type="entry name" value="Phosphoenolpyruvate carboxykinase (ATP)"/>
    <property type="match status" value="1"/>
</dbReference>
<dbReference type="Gene3D" id="3.90.228.20">
    <property type="match status" value="1"/>
</dbReference>
<dbReference type="Gene3D" id="3.40.449.10">
    <property type="entry name" value="Phosphoenolpyruvate Carboxykinase, domain 1"/>
    <property type="match status" value="1"/>
</dbReference>
<dbReference type="Gene3D" id="2.170.8.10">
    <property type="entry name" value="Phosphoenolpyruvate Carboxykinase, domain 2"/>
    <property type="match status" value="1"/>
</dbReference>
<dbReference type="HAMAP" id="MF_00453">
    <property type="entry name" value="PEPCK_ATP"/>
    <property type="match status" value="1"/>
</dbReference>
<dbReference type="InterPro" id="IPR001272">
    <property type="entry name" value="PEP_carboxykinase_ATP"/>
</dbReference>
<dbReference type="InterPro" id="IPR013035">
    <property type="entry name" value="PEP_carboxykinase_C"/>
</dbReference>
<dbReference type="InterPro" id="IPR008210">
    <property type="entry name" value="PEP_carboxykinase_N"/>
</dbReference>
<dbReference type="InterPro" id="IPR015994">
    <property type="entry name" value="PEPCK_ATP_CS"/>
</dbReference>
<dbReference type="NCBIfam" id="TIGR00224">
    <property type="entry name" value="pckA"/>
    <property type="match status" value="1"/>
</dbReference>
<dbReference type="NCBIfam" id="NF006820">
    <property type="entry name" value="PRK09344.1-2"/>
    <property type="match status" value="1"/>
</dbReference>
<dbReference type="NCBIfam" id="NF006821">
    <property type="entry name" value="PRK09344.1-3"/>
    <property type="match status" value="1"/>
</dbReference>
<dbReference type="PANTHER" id="PTHR30031:SF0">
    <property type="entry name" value="PHOSPHOENOLPYRUVATE CARBOXYKINASE (ATP)"/>
    <property type="match status" value="1"/>
</dbReference>
<dbReference type="PANTHER" id="PTHR30031">
    <property type="entry name" value="PHOSPHOENOLPYRUVATE CARBOXYKINASE ATP"/>
    <property type="match status" value="1"/>
</dbReference>
<dbReference type="Pfam" id="PF01293">
    <property type="entry name" value="PEPCK_ATP"/>
    <property type="match status" value="1"/>
</dbReference>
<dbReference type="PIRSF" id="PIRSF006294">
    <property type="entry name" value="PEP_crbxkin"/>
    <property type="match status" value="1"/>
</dbReference>
<dbReference type="SUPFAM" id="SSF68923">
    <property type="entry name" value="PEP carboxykinase N-terminal domain"/>
    <property type="match status" value="1"/>
</dbReference>
<dbReference type="SUPFAM" id="SSF53795">
    <property type="entry name" value="PEP carboxykinase-like"/>
    <property type="match status" value="1"/>
</dbReference>
<dbReference type="PROSITE" id="PS00532">
    <property type="entry name" value="PEPCK_ATP"/>
    <property type="match status" value="1"/>
</dbReference>
<accession>Q72YV4</accession>
<evidence type="ECO:0000255" key="1">
    <source>
        <dbReference type="HAMAP-Rule" id="MF_00453"/>
    </source>
</evidence>
<feature type="chain" id="PRO_0000203803" description="Phosphoenolpyruvate carboxykinase (ATP)">
    <location>
        <begin position="1"/>
        <end position="528"/>
    </location>
</feature>
<feature type="binding site" evidence="1">
    <location>
        <position position="56"/>
    </location>
    <ligand>
        <name>substrate</name>
    </ligand>
</feature>
<feature type="binding site" evidence="1">
    <location>
        <position position="192"/>
    </location>
    <ligand>
        <name>substrate</name>
    </ligand>
</feature>
<feature type="binding site" evidence="1">
    <location>
        <position position="198"/>
    </location>
    <ligand>
        <name>ATP</name>
        <dbReference type="ChEBI" id="CHEBI:30616"/>
    </ligand>
</feature>
<feature type="binding site" evidence="1">
    <location>
        <position position="198"/>
    </location>
    <ligand>
        <name>Mn(2+)</name>
        <dbReference type="ChEBI" id="CHEBI:29035"/>
    </ligand>
</feature>
<feature type="binding site" evidence="1">
    <location>
        <position position="198"/>
    </location>
    <ligand>
        <name>substrate</name>
    </ligand>
</feature>
<feature type="binding site" evidence="1">
    <location>
        <position position="217"/>
    </location>
    <ligand>
        <name>ATP</name>
        <dbReference type="ChEBI" id="CHEBI:30616"/>
    </ligand>
</feature>
<feature type="binding site" evidence="1">
    <location>
        <position position="217"/>
    </location>
    <ligand>
        <name>Mn(2+)</name>
        <dbReference type="ChEBI" id="CHEBI:29035"/>
    </ligand>
</feature>
<feature type="binding site" evidence="1">
    <location>
        <begin position="233"/>
        <end position="241"/>
    </location>
    <ligand>
        <name>ATP</name>
        <dbReference type="ChEBI" id="CHEBI:30616"/>
    </ligand>
</feature>
<feature type="binding site" evidence="1">
    <location>
        <position position="254"/>
    </location>
    <ligand>
        <name>Mn(2+)</name>
        <dbReference type="ChEBI" id="CHEBI:29035"/>
    </ligand>
</feature>
<feature type="binding site" evidence="1">
    <location>
        <position position="282"/>
    </location>
    <ligand>
        <name>ATP</name>
        <dbReference type="ChEBI" id="CHEBI:30616"/>
    </ligand>
</feature>
<feature type="binding site" evidence="1">
    <location>
        <position position="319"/>
    </location>
    <ligand>
        <name>ATP</name>
        <dbReference type="ChEBI" id="CHEBI:30616"/>
    </ligand>
</feature>
<feature type="binding site" evidence="1">
    <location>
        <position position="319"/>
    </location>
    <ligand>
        <name>substrate</name>
    </ligand>
</feature>
<feature type="binding site" evidence="1">
    <location>
        <position position="444"/>
    </location>
    <ligand>
        <name>ATP</name>
        <dbReference type="ChEBI" id="CHEBI:30616"/>
    </ligand>
</feature>
<comment type="function">
    <text evidence="1">Involved in the gluconeogenesis. Catalyzes the conversion of oxaloacetate (OAA) to phosphoenolpyruvate (PEP) through direct phosphoryl transfer between the nucleoside triphosphate and OAA.</text>
</comment>
<comment type="catalytic activity">
    <reaction evidence="1">
        <text>oxaloacetate + ATP = phosphoenolpyruvate + ADP + CO2</text>
        <dbReference type="Rhea" id="RHEA:18617"/>
        <dbReference type="ChEBI" id="CHEBI:16452"/>
        <dbReference type="ChEBI" id="CHEBI:16526"/>
        <dbReference type="ChEBI" id="CHEBI:30616"/>
        <dbReference type="ChEBI" id="CHEBI:58702"/>
        <dbReference type="ChEBI" id="CHEBI:456216"/>
        <dbReference type="EC" id="4.1.1.49"/>
    </reaction>
</comment>
<comment type="cofactor">
    <cofactor evidence="1">
        <name>Mn(2+)</name>
        <dbReference type="ChEBI" id="CHEBI:29035"/>
    </cofactor>
    <text evidence="1">Binds 1 Mn(2+) ion per subunit.</text>
</comment>
<comment type="pathway">
    <text evidence="1">Carbohydrate biosynthesis; gluconeogenesis.</text>
</comment>
<comment type="subcellular location">
    <subcellularLocation>
        <location evidence="1">Cytoplasm</location>
    </subcellularLocation>
</comment>
<comment type="similarity">
    <text evidence="1">Belongs to the phosphoenolpyruvate carboxykinase (ATP) family.</text>
</comment>
<sequence length="528" mass="57953">MSTVNVQIGLHELLNGSNAQIQLSVPQLVEKVLMRDEGKLTSTGAVSASTGKYTGRSPKDKFIVKEASVADKIAWGAVNQPISEEHFNKLYTKVLEYLKEKEELFVFKGFAGADRNYRLPIQVINEYAWHNLFVHQLFIRPTEEELTTHESEFTIVSAPNFKADPAVDGTNSEAFIMVSFEKRIVLIGGTEYAGEMKKSIFSIMNFLLPEQDILSMHCSANVGEEGDVALFFGLSGTGKTTLSADPNRKLIGDDEHGWSDNGVFNIEGGCYAKCVNLSHEKEPQIFDAITFGSVLENVIINDQTRIADYNDTTLTENTRAAYPMHAIDNIVLPSVAGHPNTIIFLTADASGVLPPISKLSKEQAMYHFLSGYTSKLAGTERGVTSPQATFSTCFGSPFLPLDASRYAEMLGEKIEKHDAKVFLVNTGWTGGEYGVGKRMNLGYTRAMIQAALNGELAKTETAKHDIFGLEVPLHVPGVPDEVLMPEQTWADKAAYKAKAIELANEFKANFKKFDSVSEDIINLGGPIA</sequence>
<keyword id="KW-0067">ATP-binding</keyword>
<keyword id="KW-0963">Cytoplasm</keyword>
<keyword id="KW-0210">Decarboxylase</keyword>
<keyword id="KW-0312">Gluconeogenesis</keyword>
<keyword id="KW-0456">Lyase</keyword>
<keyword id="KW-0464">Manganese</keyword>
<keyword id="KW-0479">Metal-binding</keyword>
<keyword id="KW-0547">Nucleotide-binding</keyword>
<reference key="1">
    <citation type="journal article" date="2004" name="Nucleic Acids Res.">
        <title>The genome sequence of Bacillus cereus ATCC 10987 reveals metabolic adaptations and a large plasmid related to Bacillus anthracis pXO1.</title>
        <authorList>
            <person name="Rasko D.A."/>
            <person name="Ravel J."/>
            <person name="Oekstad O.A."/>
            <person name="Helgason E."/>
            <person name="Cer R.Z."/>
            <person name="Jiang L."/>
            <person name="Shores K.A."/>
            <person name="Fouts D.E."/>
            <person name="Tourasse N.J."/>
            <person name="Angiuoli S.V."/>
            <person name="Kolonay J.F."/>
            <person name="Nelson W.C."/>
            <person name="Kolstoe A.-B."/>
            <person name="Fraser C.M."/>
            <person name="Read T.D."/>
        </authorList>
    </citation>
    <scope>NUCLEOTIDE SEQUENCE [LARGE SCALE GENOMIC DNA]</scope>
    <source>
        <strain>ATCC 10987 / NRS 248</strain>
    </source>
</reference>
<protein>
    <recommendedName>
        <fullName evidence="1">Phosphoenolpyruvate carboxykinase (ATP)</fullName>
        <shortName evidence="1">PCK</shortName>
        <shortName evidence="1">PEP carboxykinase</shortName>
        <shortName evidence="1">PEPCK</shortName>
        <ecNumber evidence="1">4.1.1.49</ecNumber>
    </recommendedName>
</protein>
<organism>
    <name type="scientific">Bacillus cereus (strain ATCC 10987 / NRS 248)</name>
    <dbReference type="NCBI Taxonomy" id="222523"/>
    <lineage>
        <taxon>Bacteria</taxon>
        <taxon>Bacillati</taxon>
        <taxon>Bacillota</taxon>
        <taxon>Bacilli</taxon>
        <taxon>Bacillales</taxon>
        <taxon>Bacillaceae</taxon>
        <taxon>Bacillus</taxon>
        <taxon>Bacillus cereus group</taxon>
    </lineage>
</organism>
<gene>
    <name evidence="1" type="primary">pckA</name>
    <name type="ordered locus">BCE_4916</name>
</gene>
<proteinExistence type="inferred from homology"/>